<organism>
    <name type="scientific">Orientia tsutsugamushi (strain Boryong)</name>
    <name type="common">Rickettsia tsutsugamushi</name>
    <dbReference type="NCBI Taxonomy" id="357244"/>
    <lineage>
        <taxon>Bacteria</taxon>
        <taxon>Pseudomonadati</taxon>
        <taxon>Pseudomonadota</taxon>
        <taxon>Alphaproteobacteria</taxon>
        <taxon>Rickettsiales</taxon>
        <taxon>Rickettsiaceae</taxon>
        <taxon>Rickettsieae</taxon>
        <taxon>Orientia</taxon>
    </lineage>
</organism>
<reference key="1">
    <citation type="journal article" date="2007" name="Proc. Natl. Acad. Sci. U.S.A.">
        <title>The Orientia tsutsugamushi genome reveals massive proliferation of conjugative type IV secretion system and host-cell interaction genes.</title>
        <authorList>
            <person name="Cho N.-H."/>
            <person name="Kim H.-R."/>
            <person name="Lee J.-H."/>
            <person name="Kim S.-Y."/>
            <person name="Kim J."/>
            <person name="Cha S."/>
            <person name="Kim S.-Y."/>
            <person name="Darby A.C."/>
            <person name="Fuxelius H.-H."/>
            <person name="Yin J."/>
            <person name="Kim J.H."/>
            <person name="Kim J."/>
            <person name="Lee S.J."/>
            <person name="Koh Y.-S."/>
            <person name="Jang W.-J."/>
            <person name="Park K.-H."/>
            <person name="Andersson S.G.E."/>
            <person name="Choi M.-S."/>
            <person name="Kim I.-S."/>
        </authorList>
    </citation>
    <scope>NUCLEOTIDE SEQUENCE [LARGE SCALE GENOMIC DNA]</scope>
    <source>
        <strain>Boryong</strain>
    </source>
</reference>
<comment type="catalytic activity">
    <reaction evidence="1">
        <text>tRNA(His) + L-histidine + ATP = L-histidyl-tRNA(His) + AMP + diphosphate + H(+)</text>
        <dbReference type="Rhea" id="RHEA:17313"/>
        <dbReference type="Rhea" id="RHEA-COMP:9665"/>
        <dbReference type="Rhea" id="RHEA-COMP:9689"/>
        <dbReference type="ChEBI" id="CHEBI:15378"/>
        <dbReference type="ChEBI" id="CHEBI:30616"/>
        <dbReference type="ChEBI" id="CHEBI:33019"/>
        <dbReference type="ChEBI" id="CHEBI:57595"/>
        <dbReference type="ChEBI" id="CHEBI:78442"/>
        <dbReference type="ChEBI" id="CHEBI:78527"/>
        <dbReference type="ChEBI" id="CHEBI:456215"/>
        <dbReference type="EC" id="6.1.1.21"/>
    </reaction>
</comment>
<comment type="subunit">
    <text evidence="1">Homodimer.</text>
</comment>
<comment type="subcellular location">
    <subcellularLocation>
        <location evidence="1">Cytoplasm</location>
    </subcellularLocation>
</comment>
<comment type="similarity">
    <text evidence="1">Belongs to the class-II aminoacyl-tRNA synthetase family.</text>
</comment>
<gene>
    <name evidence="1" type="primary">hisS</name>
    <name type="ordered locus">OTBS_1585</name>
</gene>
<feature type="chain" id="PRO_1000016405" description="Histidine--tRNA ligase">
    <location>
        <begin position="1"/>
        <end position="423"/>
    </location>
</feature>
<name>SYH_ORITB</name>
<sequence length="423" mass="48115">MSIKLQPVKGSKDLLPEEFGKHDYIISVSRNLSKLYGFQPISTPIIEYTEIFNRTLGKDSDVLSKEMYVFLDKGNRSVSLRPEFTASIMRAVIYNNLQNKKLPLKYFSSGPAFRYDNPQAGRQRQFHQINLECIGDGSPFSDAEIVLLAYDILKKLNLVDKVNLEINSLGCMESRAKYQQALVEYFSKYRTELSQDSQSRLIENPLRILDSKNLHDKKISASAPSIHDYYTIEARGYFDKVLEYLEFCGIKYTINANLVRGLDYYCHTVFEYVSTQIGAQSTVLGGGRYDGLFEQMGGKLASGKKMLPAIGFAAGIERLALLTNYTPVDVRPIVIIPVDEEYHQHGIILLQKLRNNNITTVIDLQDSISKRLNRANHIKASKVIFIGAIEMREQSYRIKDLDTSNECVIIHNELLSYLQNNCS</sequence>
<accession>A5CEP8</accession>
<protein>
    <recommendedName>
        <fullName evidence="1">Histidine--tRNA ligase</fullName>
        <ecNumber evidence="1">6.1.1.21</ecNumber>
    </recommendedName>
    <alternativeName>
        <fullName evidence="1">Histidyl-tRNA synthetase</fullName>
        <shortName evidence="1">HisRS</shortName>
    </alternativeName>
</protein>
<proteinExistence type="inferred from homology"/>
<keyword id="KW-0030">Aminoacyl-tRNA synthetase</keyword>
<keyword id="KW-0067">ATP-binding</keyword>
<keyword id="KW-0963">Cytoplasm</keyword>
<keyword id="KW-0436">Ligase</keyword>
<keyword id="KW-0547">Nucleotide-binding</keyword>
<keyword id="KW-0648">Protein biosynthesis</keyword>
<keyword id="KW-1185">Reference proteome</keyword>
<dbReference type="EC" id="6.1.1.21" evidence="1"/>
<dbReference type="EMBL" id="AM494475">
    <property type="protein sequence ID" value="CAM80678.1"/>
    <property type="molecule type" value="Genomic_DNA"/>
</dbReference>
<dbReference type="RefSeq" id="WP_011944957.1">
    <property type="nucleotide sequence ID" value="NC_009488.1"/>
</dbReference>
<dbReference type="SMR" id="A5CEP8"/>
<dbReference type="KEGG" id="ots:OTBS_1585"/>
<dbReference type="eggNOG" id="COG0124">
    <property type="taxonomic scope" value="Bacteria"/>
</dbReference>
<dbReference type="HOGENOM" id="CLU_025113_1_1_5"/>
<dbReference type="Proteomes" id="UP000001565">
    <property type="component" value="Chromosome"/>
</dbReference>
<dbReference type="GO" id="GO:0005737">
    <property type="term" value="C:cytoplasm"/>
    <property type="evidence" value="ECO:0007669"/>
    <property type="project" value="UniProtKB-SubCell"/>
</dbReference>
<dbReference type="GO" id="GO:0005524">
    <property type="term" value="F:ATP binding"/>
    <property type="evidence" value="ECO:0007669"/>
    <property type="project" value="UniProtKB-UniRule"/>
</dbReference>
<dbReference type="GO" id="GO:0004821">
    <property type="term" value="F:histidine-tRNA ligase activity"/>
    <property type="evidence" value="ECO:0007669"/>
    <property type="project" value="UniProtKB-UniRule"/>
</dbReference>
<dbReference type="GO" id="GO:0006427">
    <property type="term" value="P:histidyl-tRNA aminoacylation"/>
    <property type="evidence" value="ECO:0007669"/>
    <property type="project" value="UniProtKB-UniRule"/>
</dbReference>
<dbReference type="CDD" id="cd00773">
    <property type="entry name" value="HisRS-like_core"/>
    <property type="match status" value="1"/>
</dbReference>
<dbReference type="Gene3D" id="3.40.50.800">
    <property type="entry name" value="Anticodon-binding domain"/>
    <property type="match status" value="1"/>
</dbReference>
<dbReference type="Gene3D" id="3.30.930.10">
    <property type="entry name" value="Bira Bifunctional Protein, Domain 2"/>
    <property type="match status" value="1"/>
</dbReference>
<dbReference type="HAMAP" id="MF_00127">
    <property type="entry name" value="His_tRNA_synth"/>
    <property type="match status" value="1"/>
</dbReference>
<dbReference type="InterPro" id="IPR006195">
    <property type="entry name" value="aa-tRNA-synth_II"/>
</dbReference>
<dbReference type="InterPro" id="IPR045864">
    <property type="entry name" value="aa-tRNA-synth_II/BPL/LPL"/>
</dbReference>
<dbReference type="InterPro" id="IPR004154">
    <property type="entry name" value="Anticodon-bd"/>
</dbReference>
<dbReference type="InterPro" id="IPR036621">
    <property type="entry name" value="Anticodon-bd_dom_sf"/>
</dbReference>
<dbReference type="InterPro" id="IPR015807">
    <property type="entry name" value="His-tRNA-ligase"/>
</dbReference>
<dbReference type="InterPro" id="IPR041715">
    <property type="entry name" value="HisRS-like_core"/>
</dbReference>
<dbReference type="InterPro" id="IPR004516">
    <property type="entry name" value="HisRS/HisZ"/>
</dbReference>
<dbReference type="NCBIfam" id="TIGR00442">
    <property type="entry name" value="hisS"/>
    <property type="match status" value="1"/>
</dbReference>
<dbReference type="PANTHER" id="PTHR43707:SF1">
    <property type="entry name" value="HISTIDINE--TRNA LIGASE, MITOCHONDRIAL-RELATED"/>
    <property type="match status" value="1"/>
</dbReference>
<dbReference type="PANTHER" id="PTHR43707">
    <property type="entry name" value="HISTIDYL-TRNA SYNTHETASE"/>
    <property type="match status" value="1"/>
</dbReference>
<dbReference type="Pfam" id="PF03129">
    <property type="entry name" value="HGTP_anticodon"/>
    <property type="match status" value="1"/>
</dbReference>
<dbReference type="Pfam" id="PF13393">
    <property type="entry name" value="tRNA-synt_His"/>
    <property type="match status" value="1"/>
</dbReference>
<dbReference type="PIRSF" id="PIRSF001549">
    <property type="entry name" value="His-tRNA_synth"/>
    <property type="match status" value="1"/>
</dbReference>
<dbReference type="SUPFAM" id="SSF52954">
    <property type="entry name" value="Class II aaRS ABD-related"/>
    <property type="match status" value="1"/>
</dbReference>
<dbReference type="SUPFAM" id="SSF55681">
    <property type="entry name" value="Class II aaRS and biotin synthetases"/>
    <property type="match status" value="1"/>
</dbReference>
<dbReference type="PROSITE" id="PS50862">
    <property type="entry name" value="AA_TRNA_LIGASE_II"/>
    <property type="match status" value="1"/>
</dbReference>
<evidence type="ECO:0000255" key="1">
    <source>
        <dbReference type="HAMAP-Rule" id="MF_00127"/>
    </source>
</evidence>